<gene>
    <name evidence="1" type="primary">gltX</name>
    <name type="ordered locus">Bcep18194_A5365</name>
</gene>
<evidence type="ECO:0000255" key="1">
    <source>
        <dbReference type="HAMAP-Rule" id="MF_00022"/>
    </source>
</evidence>
<evidence type="ECO:0000305" key="2"/>
<reference key="1">
    <citation type="submission" date="2005-10" db="EMBL/GenBank/DDBJ databases">
        <title>Complete sequence of chromosome 1 of Burkholderia sp. 383.</title>
        <authorList>
            <consortium name="US DOE Joint Genome Institute"/>
            <person name="Copeland A."/>
            <person name="Lucas S."/>
            <person name="Lapidus A."/>
            <person name="Barry K."/>
            <person name="Detter J.C."/>
            <person name="Glavina T."/>
            <person name="Hammon N."/>
            <person name="Israni S."/>
            <person name="Pitluck S."/>
            <person name="Chain P."/>
            <person name="Malfatti S."/>
            <person name="Shin M."/>
            <person name="Vergez L."/>
            <person name="Schmutz J."/>
            <person name="Larimer F."/>
            <person name="Land M."/>
            <person name="Kyrpides N."/>
            <person name="Lykidis A."/>
            <person name="Richardson P."/>
        </authorList>
    </citation>
    <scope>NUCLEOTIDE SEQUENCE [LARGE SCALE GENOMIC DNA]</scope>
    <source>
        <strain>ATCC 17760 / DSM 23089 / LMG 22485 / NCIMB 9086 / R18194 / 383</strain>
    </source>
</reference>
<dbReference type="EC" id="6.1.1.17" evidence="1"/>
<dbReference type="EMBL" id="CP000151">
    <property type="protein sequence ID" value="ABB08959.1"/>
    <property type="status" value="ALT_INIT"/>
    <property type="molecule type" value="Genomic_DNA"/>
</dbReference>
<dbReference type="RefSeq" id="WP_041492884.1">
    <property type="nucleotide sequence ID" value="NC_007510.1"/>
</dbReference>
<dbReference type="SMR" id="Q39F07"/>
<dbReference type="GeneID" id="45095247"/>
<dbReference type="KEGG" id="bur:Bcep18194_A5365"/>
<dbReference type="PATRIC" id="fig|482957.22.peg.2316"/>
<dbReference type="HOGENOM" id="CLU_015768_6_0_4"/>
<dbReference type="Proteomes" id="UP000002705">
    <property type="component" value="Chromosome 1"/>
</dbReference>
<dbReference type="GO" id="GO:0005829">
    <property type="term" value="C:cytosol"/>
    <property type="evidence" value="ECO:0007669"/>
    <property type="project" value="TreeGrafter"/>
</dbReference>
<dbReference type="GO" id="GO:0005524">
    <property type="term" value="F:ATP binding"/>
    <property type="evidence" value="ECO:0007669"/>
    <property type="project" value="UniProtKB-UniRule"/>
</dbReference>
<dbReference type="GO" id="GO:0004818">
    <property type="term" value="F:glutamate-tRNA ligase activity"/>
    <property type="evidence" value="ECO:0007669"/>
    <property type="project" value="UniProtKB-UniRule"/>
</dbReference>
<dbReference type="GO" id="GO:0000049">
    <property type="term" value="F:tRNA binding"/>
    <property type="evidence" value="ECO:0007669"/>
    <property type="project" value="InterPro"/>
</dbReference>
<dbReference type="GO" id="GO:0008270">
    <property type="term" value="F:zinc ion binding"/>
    <property type="evidence" value="ECO:0007669"/>
    <property type="project" value="InterPro"/>
</dbReference>
<dbReference type="GO" id="GO:0006424">
    <property type="term" value="P:glutamyl-tRNA aminoacylation"/>
    <property type="evidence" value="ECO:0007669"/>
    <property type="project" value="UniProtKB-UniRule"/>
</dbReference>
<dbReference type="CDD" id="cd00808">
    <property type="entry name" value="GluRS_core"/>
    <property type="match status" value="1"/>
</dbReference>
<dbReference type="FunFam" id="3.40.50.620:FF:000007">
    <property type="entry name" value="Glutamate--tRNA ligase"/>
    <property type="match status" value="1"/>
</dbReference>
<dbReference type="Gene3D" id="1.10.10.350">
    <property type="match status" value="1"/>
</dbReference>
<dbReference type="Gene3D" id="1.10.8.70">
    <property type="entry name" value="Glutamate-tRNA synthetase, class I, anticodon-binding domain 1"/>
    <property type="match status" value="1"/>
</dbReference>
<dbReference type="Gene3D" id="3.40.50.620">
    <property type="entry name" value="HUPs"/>
    <property type="match status" value="1"/>
</dbReference>
<dbReference type="HAMAP" id="MF_00022">
    <property type="entry name" value="Glu_tRNA_synth_type1"/>
    <property type="match status" value="1"/>
</dbReference>
<dbReference type="InterPro" id="IPR045462">
    <property type="entry name" value="aa-tRNA-synth_I_cd-bd"/>
</dbReference>
<dbReference type="InterPro" id="IPR020751">
    <property type="entry name" value="aa-tRNA-synth_I_codon-bd_sub2"/>
</dbReference>
<dbReference type="InterPro" id="IPR001412">
    <property type="entry name" value="aa-tRNA-synth_I_CS"/>
</dbReference>
<dbReference type="InterPro" id="IPR008925">
    <property type="entry name" value="aa_tRNA-synth_I_cd-bd_sf"/>
</dbReference>
<dbReference type="InterPro" id="IPR004527">
    <property type="entry name" value="Glu-tRNA-ligase_bac/mito"/>
</dbReference>
<dbReference type="InterPro" id="IPR020752">
    <property type="entry name" value="Glu-tRNA-synth_I_codon-bd_sub1"/>
</dbReference>
<dbReference type="InterPro" id="IPR000924">
    <property type="entry name" value="Glu/Gln-tRNA-synth"/>
</dbReference>
<dbReference type="InterPro" id="IPR020058">
    <property type="entry name" value="Glu/Gln-tRNA-synth_Ib_cat-dom"/>
</dbReference>
<dbReference type="InterPro" id="IPR049940">
    <property type="entry name" value="GluQ/Sye"/>
</dbReference>
<dbReference type="InterPro" id="IPR033910">
    <property type="entry name" value="GluRS_core"/>
</dbReference>
<dbReference type="InterPro" id="IPR014729">
    <property type="entry name" value="Rossmann-like_a/b/a_fold"/>
</dbReference>
<dbReference type="NCBIfam" id="TIGR00464">
    <property type="entry name" value="gltX_bact"/>
    <property type="match status" value="1"/>
</dbReference>
<dbReference type="PANTHER" id="PTHR43311">
    <property type="entry name" value="GLUTAMATE--TRNA LIGASE"/>
    <property type="match status" value="1"/>
</dbReference>
<dbReference type="PANTHER" id="PTHR43311:SF2">
    <property type="entry name" value="GLUTAMATE--TRNA LIGASE, MITOCHONDRIAL-RELATED"/>
    <property type="match status" value="1"/>
</dbReference>
<dbReference type="Pfam" id="PF19269">
    <property type="entry name" value="Anticodon_2"/>
    <property type="match status" value="1"/>
</dbReference>
<dbReference type="Pfam" id="PF00749">
    <property type="entry name" value="tRNA-synt_1c"/>
    <property type="match status" value="1"/>
</dbReference>
<dbReference type="PRINTS" id="PR00987">
    <property type="entry name" value="TRNASYNTHGLU"/>
</dbReference>
<dbReference type="SUPFAM" id="SSF48163">
    <property type="entry name" value="An anticodon-binding domain of class I aminoacyl-tRNA synthetases"/>
    <property type="match status" value="1"/>
</dbReference>
<dbReference type="SUPFAM" id="SSF52374">
    <property type="entry name" value="Nucleotidylyl transferase"/>
    <property type="match status" value="1"/>
</dbReference>
<dbReference type="PROSITE" id="PS00178">
    <property type="entry name" value="AA_TRNA_LIGASE_I"/>
    <property type="match status" value="1"/>
</dbReference>
<feature type="chain" id="PRO_0000237348" description="Glutamate--tRNA ligase">
    <location>
        <begin position="1"/>
        <end position="469"/>
    </location>
</feature>
<feature type="short sequence motif" description="'HIGH' region" evidence="1">
    <location>
        <begin position="11"/>
        <end position="21"/>
    </location>
</feature>
<feature type="short sequence motif" description="'KMSKS' region" evidence="1">
    <location>
        <begin position="243"/>
        <end position="247"/>
    </location>
</feature>
<feature type="binding site" evidence="1">
    <location>
        <position position="246"/>
    </location>
    <ligand>
        <name>ATP</name>
        <dbReference type="ChEBI" id="CHEBI:30616"/>
    </ligand>
</feature>
<protein>
    <recommendedName>
        <fullName evidence="1">Glutamate--tRNA ligase</fullName>
        <ecNumber evidence="1">6.1.1.17</ecNumber>
    </recommendedName>
    <alternativeName>
        <fullName evidence="1">Glutamyl-tRNA synthetase</fullName>
        <shortName evidence="1">GluRS</shortName>
    </alternativeName>
</protein>
<keyword id="KW-0030">Aminoacyl-tRNA synthetase</keyword>
<keyword id="KW-0067">ATP-binding</keyword>
<keyword id="KW-0963">Cytoplasm</keyword>
<keyword id="KW-0436">Ligase</keyword>
<keyword id="KW-0547">Nucleotide-binding</keyword>
<keyword id="KW-0648">Protein biosynthesis</keyword>
<organism>
    <name type="scientific">Burkholderia lata (strain ATCC 17760 / DSM 23089 / LMG 22485 / NCIMB 9086 / R18194 / 383)</name>
    <dbReference type="NCBI Taxonomy" id="482957"/>
    <lineage>
        <taxon>Bacteria</taxon>
        <taxon>Pseudomonadati</taxon>
        <taxon>Pseudomonadota</taxon>
        <taxon>Betaproteobacteria</taxon>
        <taxon>Burkholderiales</taxon>
        <taxon>Burkholderiaceae</taxon>
        <taxon>Burkholderia</taxon>
        <taxon>Burkholderia cepacia complex</taxon>
    </lineage>
</organism>
<accession>Q39F07</accession>
<sequence>MTRPVRTRFAPSPTGFIHLGNIRSALYPWAFARKMKGTFVLRIEDTDVERSSQEAVDAILDGMQWLGLDFDEGPIYQMQRMDRYREVIAQMLEKGLAYPCYMSAEELDALRERQREAGLKPRYDGTWRPEPGKVLPEPPAGVKPVLRFRNPLTGTVVWDDAVKGRVEISNEELDDLVIARPDGTPIYNFCVVVDDMDMGITHVIRGDDHVNNTPRQINILNALGGEPPVYAHLPTVLNEQGEKMSKRHGAMSVMAYRDAGFLPEAVVNYLARLGWSHGDAEIFSREQFVEWFDLEHLGKSPAQYDHSKLSWLNAHYIKEADNARLAELAKPFLAALGIDDAAIATGPALEAVVGLMKDRATTVKEIAEGATMFYRVPAPEADALAQHVTDVVRPALADLVAALKAADWTKEAVSAALKATLGTHKLKMPQLAMPVRLLVAGTTHTPSIDAVLVLFGRDVVVSRIEAALA</sequence>
<proteinExistence type="inferred from homology"/>
<comment type="function">
    <text evidence="1">Catalyzes the attachment of glutamate to tRNA(Glu) in a two-step reaction: glutamate is first activated by ATP to form Glu-AMP and then transferred to the acceptor end of tRNA(Glu).</text>
</comment>
<comment type="catalytic activity">
    <reaction evidence="1">
        <text>tRNA(Glu) + L-glutamate + ATP = L-glutamyl-tRNA(Glu) + AMP + diphosphate</text>
        <dbReference type="Rhea" id="RHEA:23540"/>
        <dbReference type="Rhea" id="RHEA-COMP:9663"/>
        <dbReference type="Rhea" id="RHEA-COMP:9680"/>
        <dbReference type="ChEBI" id="CHEBI:29985"/>
        <dbReference type="ChEBI" id="CHEBI:30616"/>
        <dbReference type="ChEBI" id="CHEBI:33019"/>
        <dbReference type="ChEBI" id="CHEBI:78442"/>
        <dbReference type="ChEBI" id="CHEBI:78520"/>
        <dbReference type="ChEBI" id="CHEBI:456215"/>
        <dbReference type="EC" id="6.1.1.17"/>
    </reaction>
</comment>
<comment type="subunit">
    <text evidence="1">Monomer.</text>
</comment>
<comment type="subcellular location">
    <subcellularLocation>
        <location evidence="1">Cytoplasm</location>
    </subcellularLocation>
</comment>
<comment type="similarity">
    <text evidence="1">Belongs to the class-I aminoacyl-tRNA synthetase family. Glutamate--tRNA ligase type 1 subfamily.</text>
</comment>
<comment type="sequence caution" evidence="2">
    <conflict type="erroneous initiation">
        <sequence resource="EMBL-CDS" id="ABB08959"/>
    </conflict>
</comment>
<name>SYE_BURL3</name>